<sequence>MQKQAELYRGKAKTVYSTENPDLLVLEFRNDTSAGDGARIEQFDRKGMVNNKFNYFIMSKLAEAGIPTQMERLLSDTECLVKKLDMVPVECVVRNRAAGSLVKRLGIEEGIELNPPLFDLFLKNDAMHDPMVNESYCETFGWVSKENLARMKELTYKANDVLKKLFDDAGLILVDFKLEFGLYKGEVVLGDEFSPDGSRLWDKETLEKMDKDRFRQSLGGLIEAYEAVARRLGVQLD</sequence>
<comment type="catalytic activity">
    <reaction evidence="1">
        <text>5-amino-1-(5-phospho-D-ribosyl)imidazole-4-carboxylate + L-aspartate + ATP = (2S)-2-[5-amino-1-(5-phospho-beta-D-ribosyl)imidazole-4-carboxamido]succinate + ADP + phosphate + 2 H(+)</text>
        <dbReference type="Rhea" id="RHEA:22628"/>
        <dbReference type="ChEBI" id="CHEBI:15378"/>
        <dbReference type="ChEBI" id="CHEBI:29991"/>
        <dbReference type="ChEBI" id="CHEBI:30616"/>
        <dbReference type="ChEBI" id="CHEBI:43474"/>
        <dbReference type="ChEBI" id="CHEBI:58443"/>
        <dbReference type="ChEBI" id="CHEBI:77657"/>
        <dbReference type="ChEBI" id="CHEBI:456216"/>
        <dbReference type="EC" id="6.3.2.6"/>
    </reaction>
</comment>
<comment type="pathway">
    <text evidence="1">Purine metabolism; IMP biosynthesis via de novo pathway; 5-amino-1-(5-phospho-D-ribosyl)imidazole-4-carboxamide from 5-amino-1-(5-phospho-D-ribosyl)imidazole-4-carboxylate: step 1/2.</text>
</comment>
<comment type="similarity">
    <text evidence="1">Belongs to the SAICAR synthetase family.</text>
</comment>
<gene>
    <name evidence="1" type="primary">purC</name>
    <name type="ordered locus">ECIAI1_2527</name>
</gene>
<organism>
    <name type="scientific">Escherichia coli O8 (strain IAI1)</name>
    <dbReference type="NCBI Taxonomy" id="585034"/>
    <lineage>
        <taxon>Bacteria</taxon>
        <taxon>Pseudomonadati</taxon>
        <taxon>Pseudomonadota</taxon>
        <taxon>Gammaproteobacteria</taxon>
        <taxon>Enterobacterales</taxon>
        <taxon>Enterobacteriaceae</taxon>
        <taxon>Escherichia</taxon>
    </lineage>
</organism>
<feature type="chain" id="PRO_1000117833" description="Phosphoribosylaminoimidazole-succinocarboxamide synthase">
    <location>
        <begin position="1"/>
        <end position="237"/>
    </location>
</feature>
<evidence type="ECO:0000255" key="1">
    <source>
        <dbReference type="HAMAP-Rule" id="MF_00137"/>
    </source>
</evidence>
<protein>
    <recommendedName>
        <fullName evidence="1">Phosphoribosylaminoimidazole-succinocarboxamide synthase</fullName>
        <ecNumber evidence="1">6.3.2.6</ecNumber>
    </recommendedName>
    <alternativeName>
        <fullName evidence="1">SAICAR synthetase</fullName>
    </alternativeName>
</protein>
<dbReference type="EC" id="6.3.2.6" evidence="1"/>
<dbReference type="EMBL" id="CU928160">
    <property type="protein sequence ID" value="CAQ99367.1"/>
    <property type="molecule type" value="Genomic_DNA"/>
</dbReference>
<dbReference type="RefSeq" id="WP_001295467.1">
    <property type="nucleotide sequence ID" value="NC_011741.1"/>
</dbReference>
<dbReference type="SMR" id="B7M7H9"/>
<dbReference type="GeneID" id="89517285"/>
<dbReference type="KEGG" id="ecr:ECIAI1_2527"/>
<dbReference type="HOGENOM" id="CLU_061495_2_1_6"/>
<dbReference type="UniPathway" id="UPA00074">
    <property type="reaction ID" value="UER00131"/>
</dbReference>
<dbReference type="GO" id="GO:0005829">
    <property type="term" value="C:cytosol"/>
    <property type="evidence" value="ECO:0007669"/>
    <property type="project" value="TreeGrafter"/>
</dbReference>
<dbReference type="GO" id="GO:0005524">
    <property type="term" value="F:ATP binding"/>
    <property type="evidence" value="ECO:0007669"/>
    <property type="project" value="UniProtKB-KW"/>
</dbReference>
<dbReference type="GO" id="GO:0004639">
    <property type="term" value="F:phosphoribosylaminoimidazolesuccinocarboxamide synthase activity"/>
    <property type="evidence" value="ECO:0007669"/>
    <property type="project" value="UniProtKB-UniRule"/>
</dbReference>
<dbReference type="GO" id="GO:0006189">
    <property type="term" value="P:'de novo' IMP biosynthetic process"/>
    <property type="evidence" value="ECO:0007669"/>
    <property type="project" value="UniProtKB-UniRule"/>
</dbReference>
<dbReference type="GO" id="GO:0009236">
    <property type="term" value="P:cobalamin biosynthetic process"/>
    <property type="evidence" value="ECO:0007669"/>
    <property type="project" value="InterPro"/>
</dbReference>
<dbReference type="CDD" id="cd01415">
    <property type="entry name" value="SAICAR_synt_PurC"/>
    <property type="match status" value="1"/>
</dbReference>
<dbReference type="FunFam" id="3.30.200.20:FF:000086">
    <property type="entry name" value="Phosphoribosylaminoimidazole-succinocarboxamide synthase"/>
    <property type="match status" value="1"/>
</dbReference>
<dbReference type="FunFam" id="3.30.470.20:FF:000006">
    <property type="entry name" value="Phosphoribosylaminoimidazole-succinocarboxamide synthase"/>
    <property type="match status" value="1"/>
</dbReference>
<dbReference type="Gene3D" id="3.30.470.20">
    <property type="entry name" value="ATP-grasp fold, B domain"/>
    <property type="match status" value="1"/>
</dbReference>
<dbReference type="Gene3D" id="3.30.200.20">
    <property type="entry name" value="Phosphorylase Kinase, domain 1"/>
    <property type="match status" value="1"/>
</dbReference>
<dbReference type="HAMAP" id="MF_00137">
    <property type="entry name" value="SAICAR_synth"/>
    <property type="match status" value="1"/>
</dbReference>
<dbReference type="InterPro" id="IPR028923">
    <property type="entry name" value="SAICAR_synt/ADE2_N"/>
</dbReference>
<dbReference type="InterPro" id="IPR033934">
    <property type="entry name" value="SAICAR_synt_PurC"/>
</dbReference>
<dbReference type="InterPro" id="IPR001636">
    <property type="entry name" value="SAICAR_synth"/>
</dbReference>
<dbReference type="InterPro" id="IPR050089">
    <property type="entry name" value="SAICAR_synthetase"/>
</dbReference>
<dbReference type="InterPro" id="IPR018236">
    <property type="entry name" value="SAICAR_synthetase_CS"/>
</dbReference>
<dbReference type="NCBIfam" id="TIGR00081">
    <property type="entry name" value="purC"/>
    <property type="match status" value="1"/>
</dbReference>
<dbReference type="PANTHER" id="PTHR43599">
    <property type="entry name" value="MULTIFUNCTIONAL PROTEIN ADE2"/>
    <property type="match status" value="1"/>
</dbReference>
<dbReference type="PANTHER" id="PTHR43599:SF3">
    <property type="entry name" value="SI:DKEY-6E2.2"/>
    <property type="match status" value="1"/>
</dbReference>
<dbReference type="Pfam" id="PF01259">
    <property type="entry name" value="SAICAR_synt"/>
    <property type="match status" value="1"/>
</dbReference>
<dbReference type="SUPFAM" id="SSF56104">
    <property type="entry name" value="SAICAR synthase-like"/>
    <property type="match status" value="1"/>
</dbReference>
<dbReference type="PROSITE" id="PS01057">
    <property type="entry name" value="SAICAR_SYNTHETASE_1"/>
    <property type="match status" value="1"/>
</dbReference>
<dbReference type="PROSITE" id="PS01058">
    <property type="entry name" value="SAICAR_SYNTHETASE_2"/>
    <property type="match status" value="1"/>
</dbReference>
<proteinExistence type="inferred from homology"/>
<name>PUR7_ECO8A</name>
<accession>B7M7H9</accession>
<keyword id="KW-0067">ATP-binding</keyword>
<keyword id="KW-0436">Ligase</keyword>
<keyword id="KW-0547">Nucleotide-binding</keyword>
<keyword id="KW-0658">Purine biosynthesis</keyword>
<reference key="1">
    <citation type="journal article" date="2009" name="PLoS Genet.">
        <title>Organised genome dynamics in the Escherichia coli species results in highly diverse adaptive paths.</title>
        <authorList>
            <person name="Touchon M."/>
            <person name="Hoede C."/>
            <person name="Tenaillon O."/>
            <person name="Barbe V."/>
            <person name="Baeriswyl S."/>
            <person name="Bidet P."/>
            <person name="Bingen E."/>
            <person name="Bonacorsi S."/>
            <person name="Bouchier C."/>
            <person name="Bouvet O."/>
            <person name="Calteau A."/>
            <person name="Chiapello H."/>
            <person name="Clermont O."/>
            <person name="Cruveiller S."/>
            <person name="Danchin A."/>
            <person name="Diard M."/>
            <person name="Dossat C."/>
            <person name="Karoui M.E."/>
            <person name="Frapy E."/>
            <person name="Garry L."/>
            <person name="Ghigo J.M."/>
            <person name="Gilles A.M."/>
            <person name="Johnson J."/>
            <person name="Le Bouguenec C."/>
            <person name="Lescat M."/>
            <person name="Mangenot S."/>
            <person name="Martinez-Jehanne V."/>
            <person name="Matic I."/>
            <person name="Nassif X."/>
            <person name="Oztas S."/>
            <person name="Petit M.A."/>
            <person name="Pichon C."/>
            <person name="Rouy Z."/>
            <person name="Ruf C.S."/>
            <person name="Schneider D."/>
            <person name="Tourret J."/>
            <person name="Vacherie B."/>
            <person name="Vallenet D."/>
            <person name="Medigue C."/>
            <person name="Rocha E.P.C."/>
            <person name="Denamur E."/>
        </authorList>
    </citation>
    <scope>NUCLEOTIDE SEQUENCE [LARGE SCALE GENOMIC DNA]</scope>
    <source>
        <strain>IAI1</strain>
    </source>
</reference>